<evidence type="ECO:0000269" key="1">
    <source>
    </source>
</evidence>
<evidence type="ECO:0000269" key="2">
    <source>
    </source>
</evidence>
<evidence type="ECO:0000269" key="3">
    <source>
    </source>
</evidence>
<evidence type="ECO:0000269" key="4">
    <source>
    </source>
</evidence>
<evidence type="ECO:0000269" key="5">
    <source>
    </source>
</evidence>
<evidence type="ECO:0000303" key="6">
    <source>
    </source>
</evidence>
<evidence type="ECO:0000303" key="7">
    <source>
    </source>
</evidence>
<evidence type="ECO:0000305" key="8"/>
<evidence type="ECO:0000305" key="9">
    <source>
    </source>
</evidence>
<evidence type="ECO:0007744" key="10">
    <source>
        <dbReference type="PDB" id="6LQM"/>
    </source>
</evidence>
<evidence type="ECO:0007744" key="11">
    <source>
        <dbReference type="PDB" id="6LSR"/>
    </source>
</evidence>
<evidence type="ECO:0007744" key="12">
    <source>
        <dbReference type="PDB" id="6LSS"/>
    </source>
</evidence>
<evidence type="ECO:0007744" key="13">
    <source>
        <dbReference type="PDB" id="6LU8"/>
    </source>
</evidence>
<evidence type="ECO:0007744" key="14">
    <source>
    </source>
</evidence>
<evidence type="ECO:0007744" key="15">
    <source>
    </source>
</evidence>
<evidence type="ECO:0007744" key="16">
    <source>
    </source>
</evidence>
<evidence type="ECO:0007744" key="17">
    <source>
    </source>
</evidence>
<evidence type="ECO:0007744" key="18">
    <source>
    </source>
</evidence>
<evidence type="ECO:0007744" key="19">
    <source>
    </source>
</evidence>
<accession>P26373</accession>
<accession>B4DLX3</accession>
<accession>F5H1S2</accession>
<accession>Q3KQT8</accession>
<accession>Q567Q8</accession>
<accession>Q9BPX0</accession>
<keyword id="KW-0002">3D-structure</keyword>
<keyword id="KW-0007">Acetylation</keyword>
<keyword id="KW-0025">Alternative splicing</keyword>
<keyword id="KW-0963">Cytoplasm</keyword>
<keyword id="KW-0225">Disease variant</keyword>
<keyword id="KW-0242">Dwarfism</keyword>
<keyword id="KW-1017">Isopeptide bond</keyword>
<keyword id="KW-0597">Phosphoprotein</keyword>
<keyword id="KW-1267">Proteomics identification</keyword>
<keyword id="KW-1185">Reference proteome</keyword>
<keyword id="KW-0687">Ribonucleoprotein</keyword>
<keyword id="KW-0689">Ribosomal protein</keyword>
<keyword id="KW-0832">Ubl conjugation</keyword>
<feature type="chain" id="PRO_0000192919" description="Large ribosomal subunit protein eL13">
    <location>
        <begin position="1"/>
        <end position="211"/>
    </location>
</feature>
<feature type="modified residue" description="N6-acetyllysine" evidence="15">
    <location>
        <position position="16"/>
    </location>
</feature>
<feature type="modified residue" description="Phosphoserine" evidence="17">
    <location>
        <position position="52"/>
    </location>
</feature>
<feature type="modified residue" description="Phosphoserine" evidence="14 17">
    <location>
        <position position="77"/>
    </location>
</feature>
<feature type="modified residue" description="Phosphoserine" evidence="16 17">
    <location>
        <position position="106"/>
    </location>
</feature>
<feature type="modified residue" description="N6-acetyllysine; alternate" evidence="15">
    <location>
        <position position="177"/>
    </location>
</feature>
<feature type="cross-link" description="Glycyl lysine isopeptide (Lys-Gly) (interchain with G-Cter in SUMO2)" evidence="19">
    <location>
        <position position="123"/>
    </location>
</feature>
<feature type="cross-link" description="Glycyl lysine isopeptide (Lys-Gly) (interchain with G-Cter in SUMO2)" evidence="19">
    <location>
        <position position="145"/>
    </location>
</feature>
<feature type="cross-link" description="Glycyl lysine isopeptide (Lys-Gly) (interchain with G-Cter in SUMO1); alternate" evidence="18">
    <location>
        <position position="174"/>
    </location>
</feature>
<feature type="cross-link" description="Glycyl lysine isopeptide (Lys-Gly) (interchain with G-Cter in SUMO2); alternate" evidence="19">
    <location>
        <position position="174"/>
    </location>
</feature>
<feature type="cross-link" description="Glycyl lysine isopeptide (Lys-Gly) (interchain with G-Cter in SUMO2); alternate" evidence="19">
    <location>
        <position position="177"/>
    </location>
</feature>
<feature type="splice variant" id="VSP_046028" description="In isoform 2." evidence="6">
    <location>
        <begin position="88"/>
        <end position="134"/>
    </location>
</feature>
<feature type="sequence variant" id="VAR_051801" description="In dbSNP:rs9930567." evidence="1 2">
    <original>A</original>
    <variation>T</variation>
    <location>
        <position position="112"/>
    </location>
</feature>
<feature type="sequence variant" id="VAR_051802" description="In dbSNP:rs1062450.">
    <original>T</original>
    <variation>P</variation>
    <location>
        <position position="170"/>
    </location>
</feature>
<feature type="sequence variant" id="VAR_083551" description="In SEMDIST." evidence="4">
    <original>R</original>
    <variation>P</variation>
    <location>
        <position position="183"/>
    </location>
</feature>
<feature type="sequence conflict" description="In Ref. 3; BAG59685." evidence="8" ref="3">
    <original>V</original>
    <variation>A</variation>
    <location>
        <position position="9"/>
    </location>
</feature>
<gene>
    <name type="primary">RPL13</name>
    <name type="synonym">BBC1</name>
    <name type="ORF">OK/SW-cl.46</name>
</gene>
<protein>
    <recommendedName>
        <fullName evidence="7">Large ribosomal subunit protein eL13</fullName>
    </recommendedName>
    <alternativeName>
        <fullName>60S ribosomal protein L13</fullName>
    </alternativeName>
    <alternativeName>
        <fullName>Breast basic conserved protein 1</fullName>
    </alternativeName>
</protein>
<name>RL13_HUMAN</name>
<dbReference type="EMBL" id="X64707">
    <property type="protein sequence ID" value="CAA45963.1"/>
    <property type="molecule type" value="mRNA"/>
</dbReference>
<dbReference type="EMBL" id="AB062392">
    <property type="protein sequence ID" value="BAB93479.1"/>
    <property type="molecule type" value="mRNA"/>
</dbReference>
<dbReference type="EMBL" id="AK297198">
    <property type="protein sequence ID" value="BAG59685.1"/>
    <property type="molecule type" value="mRNA"/>
</dbReference>
<dbReference type="EMBL" id="AC092123">
    <property type="status" value="NOT_ANNOTATED_CDS"/>
    <property type="molecule type" value="Genomic_DNA"/>
</dbReference>
<dbReference type="EMBL" id="BC004954">
    <property type="protein sequence ID" value="AAH04954.1"/>
    <property type="molecule type" value="mRNA"/>
</dbReference>
<dbReference type="EMBL" id="BC007345">
    <property type="protein sequence ID" value="AAH07345.1"/>
    <property type="molecule type" value="mRNA"/>
</dbReference>
<dbReference type="EMBL" id="BC007563">
    <property type="protein sequence ID" value="AAH07563.1"/>
    <property type="molecule type" value="mRNA"/>
</dbReference>
<dbReference type="EMBL" id="BC007805">
    <property type="protein sequence ID" value="AAH07805.1"/>
    <property type="molecule type" value="mRNA"/>
</dbReference>
<dbReference type="EMBL" id="BC010994">
    <property type="protein sequence ID" value="AAH10994.1"/>
    <property type="molecule type" value="mRNA"/>
</dbReference>
<dbReference type="EMBL" id="BC013078">
    <property type="protein sequence ID" value="AAH13078.1"/>
    <property type="molecule type" value="mRNA"/>
</dbReference>
<dbReference type="EMBL" id="BC014167">
    <property type="protein sequence ID" value="AAH14167.1"/>
    <property type="molecule type" value="mRNA"/>
</dbReference>
<dbReference type="EMBL" id="BC020804">
    <property type="protein sequence ID" value="AAH20804.1"/>
    <property type="molecule type" value="mRNA"/>
</dbReference>
<dbReference type="EMBL" id="BC027463">
    <property type="protein sequence ID" value="AAH27463.1"/>
    <property type="molecule type" value="mRNA"/>
</dbReference>
<dbReference type="EMBL" id="BC063378">
    <property type="protein sequence ID" value="AAH63378.1"/>
    <property type="molecule type" value="mRNA"/>
</dbReference>
<dbReference type="EMBL" id="BC093063">
    <property type="protein sequence ID" value="AAH93063.1"/>
    <property type="molecule type" value="mRNA"/>
</dbReference>
<dbReference type="EMBL" id="BC106058">
    <property type="protein sequence ID" value="AAI06059.1"/>
    <property type="molecule type" value="mRNA"/>
</dbReference>
<dbReference type="CCDS" id="CCDS10979.1">
    <molecule id="P26373-1"/>
</dbReference>
<dbReference type="CCDS" id="CCDS58492.1">
    <molecule id="P26373-2"/>
</dbReference>
<dbReference type="PIR" id="S23753">
    <property type="entry name" value="S23753"/>
</dbReference>
<dbReference type="RefSeq" id="NP_000968.2">
    <molecule id="P26373-1"/>
    <property type="nucleotide sequence ID" value="NM_000977.3"/>
</dbReference>
<dbReference type="RefSeq" id="NP_001230059.1">
    <property type="nucleotide sequence ID" value="NM_001243130.1"/>
</dbReference>
<dbReference type="RefSeq" id="NP_001230060.1">
    <molecule id="P26373-2"/>
    <property type="nucleotide sequence ID" value="NM_001243131.1"/>
</dbReference>
<dbReference type="RefSeq" id="NP_150254.1">
    <molecule id="P26373-1"/>
    <property type="nucleotide sequence ID" value="NM_033251.2"/>
</dbReference>
<dbReference type="PDB" id="4UG0">
    <property type="method" value="EM"/>
    <property type="chains" value="LL=1-211"/>
</dbReference>
<dbReference type="PDB" id="4V6X">
    <property type="method" value="EM"/>
    <property type="resolution" value="5.00 A"/>
    <property type="chains" value="CL=1-211"/>
</dbReference>
<dbReference type="PDB" id="5AJ0">
    <property type="method" value="EM"/>
    <property type="resolution" value="3.50 A"/>
    <property type="chains" value="AL=1-211"/>
</dbReference>
<dbReference type="PDB" id="5LKS">
    <property type="method" value="EM"/>
    <property type="resolution" value="3.60 A"/>
    <property type="chains" value="LL=1-211"/>
</dbReference>
<dbReference type="PDB" id="5T2C">
    <property type="method" value="EM"/>
    <property type="resolution" value="3.60 A"/>
    <property type="chains" value="r=1-211"/>
</dbReference>
<dbReference type="PDB" id="6IP5">
    <property type="method" value="EM"/>
    <property type="resolution" value="3.90 A"/>
    <property type="chains" value="2F=1-211"/>
</dbReference>
<dbReference type="PDB" id="6IP6">
    <property type="method" value="EM"/>
    <property type="resolution" value="4.50 A"/>
    <property type="chains" value="2F=1-211"/>
</dbReference>
<dbReference type="PDB" id="6IP8">
    <property type="method" value="EM"/>
    <property type="resolution" value="3.90 A"/>
    <property type="chains" value="2F=1-211"/>
</dbReference>
<dbReference type="PDB" id="6LQM">
    <property type="method" value="EM"/>
    <property type="resolution" value="3.09 A"/>
    <property type="chains" value="Q=1-211"/>
</dbReference>
<dbReference type="PDB" id="6LSR">
    <property type="method" value="EM"/>
    <property type="resolution" value="3.13 A"/>
    <property type="chains" value="Q=1-211"/>
</dbReference>
<dbReference type="PDB" id="6LSS">
    <property type="method" value="EM"/>
    <property type="resolution" value="3.23 A"/>
    <property type="chains" value="Q=1-211"/>
</dbReference>
<dbReference type="PDB" id="6LU8">
    <property type="method" value="EM"/>
    <property type="resolution" value="3.13 A"/>
    <property type="chains" value="Q=1-211"/>
</dbReference>
<dbReference type="PDB" id="6OLE">
    <property type="method" value="EM"/>
    <property type="resolution" value="3.10 A"/>
    <property type="chains" value="M=2-206"/>
</dbReference>
<dbReference type="PDB" id="6OLF">
    <property type="method" value="EM"/>
    <property type="resolution" value="3.90 A"/>
    <property type="chains" value="M=2-206"/>
</dbReference>
<dbReference type="PDB" id="6OLG">
    <property type="method" value="EM"/>
    <property type="resolution" value="3.40 A"/>
    <property type="chains" value="AL=2-206"/>
</dbReference>
<dbReference type="PDB" id="6OLI">
    <property type="method" value="EM"/>
    <property type="resolution" value="3.50 A"/>
    <property type="chains" value="M=2-206"/>
</dbReference>
<dbReference type="PDB" id="6OLZ">
    <property type="method" value="EM"/>
    <property type="resolution" value="3.90 A"/>
    <property type="chains" value="AL=2-206"/>
</dbReference>
<dbReference type="PDB" id="6OM0">
    <property type="method" value="EM"/>
    <property type="resolution" value="3.10 A"/>
    <property type="chains" value="M=2-206"/>
</dbReference>
<dbReference type="PDB" id="6OM7">
    <property type="method" value="EM"/>
    <property type="resolution" value="3.70 A"/>
    <property type="chains" value="M=2-206"/>
</dbReference>
<dbReference type="PDB" id="6QZP">
    <property type="method" value="EM"/>
    <property type="resolution" value="2.90 A"/>
    <property type="chains" value="LL=2-211"/>
</dbReference>
<dbReference type="PDB" id="6W6L">
    <property type="method" value="EM"/>
    <property type="resolution" value="3.84 A"/>
    <property type="chains" value="M=1-211"/>
</dbReference>
<dbReference type="PDB" id="6XA1">
    <property type="method" value="EM"/>
    <property type="resolution" value="2.80 A"/>
    <property type="chains" value="LL=2-205"/>
</dbReference>
<dbReference type="PDB" id="6Y0G">
    <property type="method" value="EM"/>
    <property type="resolution" value="3.20 A"/>
    <property type="chains" value="LL=1-211"/>
</dbReference>
<dbReference type="PDB" id="6Y2L">
    <property type="method" value="EM"/>
    <property type="resolution" value="3.00 A"/>
    <property type="chains" value="LL=1-211"/>
</dbReference>
<dbReference type="PDB" id="6Y57">
    <property type="method" value="EM"/>
    <property type="resolution" value="3.50 A"/>
    <property type="chains" value="LL=1-211"/>
</dbReference>
<dbReference type="PDB" id="6Y6X">
    <property type="method" value="EM"/>
    <property type="resolution" value="2.80 A"/>
    <property type="chains" value="LL=2-211"/>
</dbReference>
<dbReference type="PDB" id="6Z6L">
    <property type="method" value="EM"/>
    <property type="resolution" value="3.00 A"/>
    <property type="chains" value="LL=1-211"/>
</dbReference>
<dbReference type="PDB" id="6Z6M">
    <property type="method" value="EM"/>
    <property type="resolution" value="3.10 A"/>
    <property type="chains" value="LL=1-211"/>
</dbReference>
<dbReference type="PDB" id="6Z6N">
    <property type="method" value="EM"/>
    <property type="resolution" value="2.90 A"/>
    <property type="chains" value="LL=1-211"/>
</dbReference>
<dbReference type="PDB" id="6ZM7">
    <property type="method" value="EM"/>
    <property type="resolution" value="2.70 A"/>
    <property type="chains" value="LL=1-211"/>
</dbReference>
<dbReference type="PDB" id="6ZME">
    <property type="method" value="EM"/>
    <property type="resolution" value="3.00 A"/>
    <property type="chains" value="LL=1-211"/>
</dbReference>
<dbReference type="PDB" id="6ZMI">
    <property type="method" value="EM"/>
    <property type="resolution" value="2.60 A"/>
    <property type="chains" value="LL=1-211"/>
</dbReference>
<dbReference type="PDB" id="6ZMO">
    <property type="method" value="EM"/>
    <property type="resolution" value="3.10 A"/>
    <property type="chains" value="LL=1-211"/>
</dbReference>
<dbReference type="PDB" id="7BHP">
    <property type="method" value="EM"/>
    <property type="resolution" value="3.30 A"/>
    <property type="chains" value="LL=1-211"/>
</dbReference>
<dbReference type="PDB" id="7F5S">
    <property type="method" value="EM"/>
    <property type="resolution" value="2.72 A"/>
    <property type="chains" value="LL=1-211"/>
</dbReference>
<dbReference type="PDB" id="7OW7">
    <property type="method" value="EM"/>
    <property type="resolution" value="2.20 A"/>
    <property type="chains" value="r=1-211"/>
</dbReference>
<dbReference type="PDB" id="7QVP">
    <property type="method" value="EM"/>
    <property type="resolution" value="3.00 A"/>
    <property type="chains" value="LL/ML=1-211"/>
</dbReference>
<dbReference type="PDB" id="7XNX">
    <property type="method" value="EM"/>
    <property type="resolution" value="2.70 A"/>
    <property type="chains" value="LL=1-211"/>
</dbReference>
<dbReference type="PDB" id="7XNY">
    <property type="method" value="EM"/>
    <property type="resolution" value="2.50 A"/>
    <property type="chains" value="LL=1-211"/>
</dbReference>
<dbReference type="PDB" id="8A3D">
    <property type="method" value="EM"/>
    <property type="resolution" value="1.67 A"/>
    <property type="chains" value="r=1-211"/>
</dbReference>
<dbReference type="PDB" id="8FKP">
    <property type="method" value="EM"/>
    <property type="resolution" value="2.85 A"/>
    <property type="chains" value="L6=1-211"/>
</dbReference>
<dbReference type="PDB" id="8FKQ">
    <property type="method" value="EM"/>
    <property type="resolution" value="2.76 A"/>
    <property type="chains" value="L6=1-211"/>
</dbReference>
<dbReference type="PDB" id="8FKR">
    <property type="method" value="EM"/>
    <property type="resolution" value="2.89 A"/>
    <property type="chains" value="L6=1-211"/>
</dbReference>
<dbReference type="PDB" id="8FKS">
    <property type="method" value="EM"/>
    <property type="resolution" value="2.88 A"/>
    <property type="chains" value="L6=1-211"/>
</dbReference>
<dbReference type="PDB" id="8FKT">
    <property type="method" value="EM"/>
    <property type="resolution" value="2.81 A"/>
    <property type="chains" value="L6=1-211"/>
</dbReference>
<dbReference type="PDB" id="8FKU">
    <property type="method" value="EM"/>
    <property type="resolution" value="2.82 A"/>
    <property type="chains" value="L6=1-211"/>
</dbReference>
<dbReference type="PDB" id="8FKV">
    <property type="method" value="EM"/>
    <property type="resolution" value="2.47 A"/>
    <property type="chains" value="L6=1-211"/>
</dbReference>
<dbReference type="PDB" id="8FKW">
    <property type="method" value="EM"/>
    <property type="resolution" value="2.50 A"/>
    <property type="chains" value="L6=1-211"/>
</dbReference>
<dbReference type="PDB" id="8FKX">
    <property type="method" value="EM"/>
    <property type="resolution" value="2.59 A"/>
    <property type="chains" value="L6=1-211"/>
</dbReference>
<dbReference type="PDB" id="8FKY">
    <property type="method" value="EM"/>
    <property type="resolution" value="2.67 A"/>
    <property type="chains" value="L6=1-211"/>
</dbReference>
<dbReference type="PDB" id="8FKZ">
    <property type="method" value="EM"/>
    <property type="resolution" value="3.04 A"/>
    <property type="chains" value="L6=1-211"/>
</dbReference>
<dbReference type="PDB" id="8FL2">
    <property type="method" value="EM"/>
    <property type="resolution" value="2.67 A"/>
    <property type="chains" value="L6=1-211"/>
</dbReference>
<dbReference type="PDB" id="8FL3">
    <property type="method" value="EM"/>
    <property type="resolution" value="2.53 A"/>
    <property type="chains" value="L6=1-211"/>
</dbReference>
<dbReference type="PDB" id="8FL4">
    <property type="method" value="EM"/>
    <property type="resolution" value="2.89 A"/>
    <property type="chains" value="L6=1-211"/>
</dbReference>
<dbReference type="PDB" id="8FL6">
    <property type="method" value="EM"/>
    <property type="resolution" value="2.62 A"/>
    <property type="chains" value="L6=1-211"/>
</dbReference>
<dbReference type="PDB" id="8FL7">
    <property type="method" value="EM"/>
    <property type="resolution" value="2.55 A"/>
    <property type="chains" value="L6=1-211"/>
</dbReference>
<dbReference type="PDB" id="8FL9">
    <property type="method" value="EM"/>
    <property type="resolution" value="2.75 A"/>
    <property type="chains" value="L6=1-211"/>
</dbReference>
<dbReference type="PDB" id="8FLA">
    <property type="method" value="EM"/>
    <property type="resolution" value="2.63 A"/>
    <property type="chains" value="L6=1-211"/>
</dbReference>
<dbReference type="PDB" id="8FLB">
    <property type="method" value="EM"/>
    <property type="resolution" value="2.55 A"/>
    <property type="chains" value="L6=1-211"/>
</dbReference>
<dbReference type="PDB" id="8FLC">
    <property type="method" value="EM"/>
    <property type="resolution" value="2.76 A"/>
    <property type="chains" value="L6=1-211"/>
</dbReference>
<dbReference type="PDB" id="8FLD">
    <property type="method" value="EM"/>
    <property type="resolution" value="2.58 A"/>
    <property type="chains" value="L6=1-211"/>
</dbReference>
<dbReference type="PDB" id="8FLE">
    <property type="method" value="EM"/>
    <property type="resolution" value="2.48 A"/>
    <property type="chains" value="L6=1-211"/>
</dbReference>
<dbReference type="PDB" id="8FLF">
    <property type="method" value="EM"/>
    <property type="resolution" value="2.65 A"/>
    <property type="chains" value="L6=1-211"/>
</dbReference>
<dbReference type="PDB" id="8G5Y">
    <property type="method" value="EM"/>
    <property type="resolution" value="2.29 A"/>
    <property type="chains" value="LL=1-211"/>
</dbReference>
<dbReference type="PDB" id="8G5Z">
    <property type="method" value="EM"/>
    <property type="resolution" value="2.64 A"/>
    <property type="chains" value="LL=2-207"/>
</dbReference>
<dbReference type="PDB" id="8G60">
    <property type="method" value="EM"/>
    <property type="resolution" value="2.54 A"/>
    <property type="chains" value="LL=1-211"/>
</dbReference>
<dbReference type="PDB" id="8G61">
    <property type="method" value="EM"/>
    <property type="resolution" value="2.94 A"/>
    <property type="chains" value="LL=1-211"/>
</dbReference>
<dbReference type="PDB" id="8GLP">
    <property type="method" value="EM"/>
    <property type="resolution" value="1.67 A"/>
    <property type="chains" value="LL=1-211"/>
</dbReference>
<dbReference type="PDB" id="8IDT">
    <property type="method" value="EM"/>
    <property type="resolution" value="2.80 A"/>
    <property type="chains" value="Q=1-211"/>
</dbReference>
<dbReference type="PDB" id="8IDY">
    <property type="method" value="EM"/>
    <property type="resolution" value="3.00 A"/>
    <property type="chains" value="Q=1-211"/>
</dbReference>
<dbReference type="PDB" id="8IE3">
    <property type="method" value="EM"/>
    <property type="resolution" value="3.30 A"/>
    <property type="chains" value="Q=1-211"/>
</dbReference>
<dbReference type="PDB" id="8IFD">
    <property type="method" value="EM"/>
    <property type="resolution" value="2.59 A"/>
    <property type="chains" value="2F=1-211"/>
</dbReference>
<dbReference type="PDB" id="8IFE">
    <property type="method" value="EM"/>
    <property type="resolution" value="2.57 A"/>
    <property type="chains" value="2F=1-211"/>
</dbReference>
<dbReference type="PDB" id="8INE">
    <property type="method" value="EM"/>
    <property type="resolution" value="3.20 A"/>
    <property type="chains" value="Q=1-211"/>
</dbReference>
<dbReference type="PDB" id="8INF">
    <property type="method" value="EM"/>
    <property type="resolution" value="3.00 A"/>
    <property type="chains" value="Q=1-211"/>
</dbReference>
<dbReference type="PDB" id="8INK">
    <property type="method" value="EM"/>
    <property type="resolution" value="3.20 A"/>
    <property type="chains" value="Q=1-211"/>
</dbReference>
<dbReference type="PDB" id="8IPD">
    <property type="method" value="EM"/>
    <property type="resolution" value="3.20 A"/>
    <property type="chains" value="Q=1-211"/>
</dbReference>
<dbReference type="PDB" id="8IPX">
    <property type="method" value="EM"/>
    <property type="resolution" value="4.30 A"/>
    <property type="chains" value="Q=1-211"/>
</dbReference>
<dbReference type="PDB" id="8IPY">
    <property type="method" value="EM"/>
    <property type="resolution" value="3.20 A"/>
    <property type="chains" value="Q=1-211"/>
</dbReference>
<dbReference type="PDB" id="8IR1">
    <property type="method" value="EM"/>
    <property type="resolution" value="3.30 A"/>
    <property type="chains" value="Q=1-211"/>
</dbReference>
<dbReference type="PDB" id="8IR3">
    <property type="method" value="EM"/>
    <property type="resolution" value="3.50 A"/>
    <property type="chains" value="Q=1-211"/>
</dbReference>
<dbReference type="PDB" id="8JDJ">
    <property type="method" value="EM"/>
    <property type="resolution" value="2.50 A"/>
    <property type="chains" value="Q=1-211"/>
</dbReference>
<dbReference type="PDB" id="8JDK">
    <property type="method" value="EM"/>
    <property type="resolution" value="2.26 A"/>
    <property type="chains" value="Q=1-211"/>
</dbReference>
<dbReference type="PDB" id="8JDL">
    <property type="method" value="EM"/>
    <property type="resolution" value="2.42 A"/>
    <property type="chains" value="Q=1-211"/>
</dbReference>
<dbReference type="PDB" id="8JDM">
    <property type="method" value="EM"/>
    <property type="resolution" value="2.67 A"/>
    <property type="chains" value="Q=1-211"/>
</dbReference>
<dbReference type="PDB" id="8K2C">
    <property type="method" value="EM"/>
    <property type="resolution" value="2.40 A"/>
    <property type="chains" value="LL=1-211"/>
</dbReference>
<dbReference type="PDB" id="8OHD">
    <property type="method" value="EM"/>
    <property type="resolution" value="3.10 A"/>
    <property type="chains" value="LL=1-211"/>
</dbReference>
<dbReference type="PDB" id="8OJ0">
    <property type="method" value="EM"/>
    <property type="resolution" value="3.30 A"/>
    <property type="chains" value="LL=1-211"/>
</dbReference>
<dbReference type="PDB" id="8OJ5">
    <property type="method" value="EM"/>
    <property type="resolution" value="2.90 A"/>
    <property type="chains" value="LL=1-211"/>
</dbReference>
<dbReference type="PDB" id="8OJ8">
    <property type="method" value="EM"/>
    <property type="resolution" value="3.30 A"/>
    <property type="chains" value="LL=1-211"/>
</dbReference>
<dbReference type="PDB" id="8QFD">
    <property type="method" value="EM"/>
    <property type="resolution" value="2.20 A"/>
    <property type="chains" value="L=1-211"/>
</dbReference>
<dbReference type="PDB" id="8QOI">
    <property type="method" value="EM"/>
    <property type="resolution" value="1.90 A"/>
    <property type="chains" value="LL=1-211"/>
</dbReference>
<dbReference type="PDB" id="8QYX">
    <property type="method" value="EM"/>
    <property type="resolution" value="1.78 A"/>
    <property type="chains" value="F1=1-211"/>
</dbReference>
<dbReference type="PDB" id="8RL2">
    <property type="method" value="EM"/>
    <property type="resolution" value="2.84 A"/>
    <property type="chains" value="LL=1-211"/>
</dbReference>
<dbReference type="PDB" id="8UKB">
    <property type="method" value="EM"/>
    <property type="resolution" value="3.05 A"/>
    <property type="chains" value="LL=2-211"/>
</dbReference>
<dbReference type="PDB" id="8XSX">
    <property type="method" value="EM"/>
    <property type="resolution" value="2.40 A"/>
    <property type="chains" value="LL=1-211"/>
</dbReference>
<dbReference type="PDB" id="8XSY">
    <property type="method" value="EM"/>
    <property type="resolution" value="3.00 A"/>
    <property type="chains" value="LL=1-211"/>
</dbReference>
<dbReference type="PDB" id="8XSZ">
    <property type="method" value="EM"/>
    <property type="resolution" value="3.20 A"/>
    <property type="chains" value="LL=1-211"/>
</dbReference>
<dbReference type="PDB" id="8Y0W">
    <property type="method" value="EM"/>
    <property type="resolution" value="3.40 A"/>
    <property type="chains" value="LL=1-211"/>
</dbReference>
<dbReference type="PDB" id="8Y0X">
    <property type="method" value="EM"/>
    <property type="resolution" value="3.30 A"/>
    <property type="chains" value="LL=1-211"/>
</dbReference>
<dbReference type="PDB" id="8YOO">
    <property type="method" value="EM"/>
    <property type="resolution" value="2.00 A"/>
    <property type="chains" value="LL=1-211"/>
</dbReference>
<dbReference type="PDB" id="8YOP">
    <property type="method" value="EM"/>
    <property type="resolution" value="2.20 A"/>
    <property type="chains" value="LL=1-211"/>
</dbReference>
<dbReference type="PDB" id="9C3H">
    <property type="method" value="EM"/>
    <property type="resolution" value="2.00 A"/>
    <property type="chains" value="LQ=1-211"/>
</dbReference>
<dbReference type="PDB" id="9G8M">
    <property type="method" value="EM"/>
    <property type="resolution" value="3.30 A"/>
    <property type="chains" value="LL=1-211"/>
</dbReference>
<dbReference type="PDB" id="9GMO">
    <property type="method" value="EM"/>
    <property type="resolution" value="2.59 A"/>
    <property type="chains" value="r=1-211"/>
</dbReference>
<dbReference type="PDBsum" id="4UG0"/>
<dbReference type="PDBsum" id="4V6X"/>
<dbReference type="PDBsum" id="5AJ0"/>
<dbReference type="PDBsum" id="5LKS"/>
<dbReference type="PDBsum" id="5T2C"/>
<dbReference type="PDBsum" id="6IP5"/>
<dbReference type="PDBsum" id="6IP6"/>
<dbReference type="PDBsum" id="6IP8"/>
<dbReference type="PDBsum" id="6LQM"/>
<dbReference type="PDBsum" id="6LSR"/>
<dbReference type="PDBsum" id="6LSS"/>
<dbReference type="PDBsum" id="6LU8"/>
<dbReference type="PDBsum" id="6OLE"/>
<dbReference type="PDBsum" id="6OLF"/>
<dbReference type="PDBsum" id="6OLG"/>
<dbReference type="PDBsum" id="6OLI"/>
<dbReference type="PDBsum" id="6OLZ"/>
<dbReference type="PDBsum" id="6OM0"/>
<dbReference type="PDBsum" id="6OM7"/>
<dbReference type="PDBsum" id="6QZP"/>
<dbReference type="PDBsum" id="6W6L"/>
<dbReference type="PDBsum" id="6XA1"/>
<dbReference type="PDBsum" id="6Y0G"/>
<dbReference type="PDBsum" id="6Y2L"/>
<dbReference type="PDBsum" id="6Y57"/>
<dbReference type="PDBsum" id="6Y6X"/>
<dbReference type="PDBsum" id="6Z6L"/>
<dbReference type="PDBsum" id="6Z6M"/>
<dbReference type="PDBsum" id="6Z6N"/>
<dbReference type="PDBsum" id="6ZM7"/>
<dbReference type="PDBsum" id="6ZME"/>
<dbReference type="PDBsum" id="6ZMI"/>
<dbReference type="PDBsum" id="6ZMO"/>
<dbReference type="PDBsum" id="7BHP"/>
<dbReference type="PDBsum" id="7F5S"/>
<dbReference type="PDBsum" id="7OW7"/>
<dbReference type="PDBsum" id="7QVP"/>
<dbReference type="PDBsum" id="7XNX"/>
<dbReference type="PDBsum" id="7XNY"/>
<dbReference type="PDBsum" id="8A3D"/>
<dbReference type="PDBsum" id="8FKP"/>
<dbReference type="PDBsum" id="8FKQ"/>
<dbReference type="PDBsum" id="8FKR"/>
<dbReference type="PDBsum" id="8FKS"/>
<dbReference type="PDBsum" id="8FKT"/>
<dbReference type="PDBsum" id="8FKU"/>
<dbReference type="PDBsum" id="8FKV"/>
<dbReference type="PDBsum" id="8FKW"/>
<dbReference type="PDBsum" id="8FKX"/>
<dbReference type="PDBsum" id="8FKY"/>
<dbReference type="PDBsum" id="8FKZ"/>
<dbReference type="PDBsum" id="8FL2"/>
<dbReference type="PDBsum" id="8FL3"/>
<dbReference type="PDBsum" id="8FL4"/>
<dbReference type="PDBsum" id="8FL6"/>
<dbReference type="PDBsum" id="8FL7"/>
<dbReference type="PDBsum" id="8FL9"/>
<dbReference type="PDBsum" id="8FLA"/>
<dbReference type="PDBsum" id="8FLB"/>
<dbReference type="PDBsum" id="8FLC"/>
<dbReference type="PDBsum" id="8FLD"/>
<dbReference type="PDBsum" id="8FLE"/>
<dbReference type="PDBsum" id="8FLF"/>
<dbReference type="PDBsum" id="8G5Y"/>
<dbReference type="PDBsum" id="8G5Z"/>
<dbReference type="PDBsum" id="8G60"/>
<dbReference type="PDBsum" id="8G61"/>
<dbReference type="PDBsum" id="8GLP"/>
<dbReference type="PDBsum" id="8IDT"/>
<dbReference type="PDBsum" id="8IDY"/>
<dbReference type="PDBsum" id="8IE3"/>
<dbReference type="PDBsum" id="8IFD"/>
<dbReference type="PDBsum" id="8IFE"/>
<dbReference type="PDBsum" id="8INE"/>
<dbReference type="PDBsum" id="8INF"/>
<dbReference type="PDBsum" id="8INK"/>
<dbReference type="PDBsum" id="8IPD"/>
<dbReference type="PDBsum" id="8IPX"/>
<dbReference type="PDBsum" id="8IPY"/>
<dbReference type="PDBsum" id="8IR1"/>
<dbReference type="PDBsum" id="8IR3"/>
<dbReference type="PDBsum" id="8JDJ"/>
<dbReference type="PDBsum" id="8JDK"/>
<dbReference type="PDBsum" id="8JDL"/>
<dbReference type="PDBsum" id="8JDM"/>
<dbReference type="PDBsum" id="8K2C"/>
<dbReference type="PDBsum" id="8OHD"/>
<dbReference type="PDBsum" id="8OJ0"/>
<dbReference type="PDBsum" id="8OJ5"/>
<dbReference type="PDBsum" id="8OJ8"/>
<dbReference type="PDBsum" id="8QFD"/>
<dbReference type="PDBsum" id="8QOI"/>
<dbReference type="PDBsum" id="8QYX"/>
<dbReference type="PDBsum" id="8RL2"/>
<dbReference type="PDBsum" id="8UKB"/>
<dbReference type="PDBsum" id="8XSX"/>
<dbReference type="PDBsum" id="8XSY"/>
<dbReference type="PDBsum" id="8XSZ"/>
<dbReference type="PDBsum" id="8Y0W"/>
<dbReference type="PDBsum" id="8Y0X"/>
<dbReference type="PDBsum" id="8YOO"/>
<dbReference type="PDBsum" id="8YOP"/>
<dbReference type="PDBsum" id="9C3H"/>
<dbReference type="PDBsum" id="9G8M"/>
<dbReference type="PDBsum" id="9GMO"/>
<dbReference type="EMDB" id="EMD-0948"/>
<dbReference type="EMDB" id="EMD-0963"/>
<dbReference type="EMDB" id="EMD-0964"/>
<dbReference type="EMDB" id="EMD-0978"/>
<dbReference type="EMDB" id="EMD-10668"/>
<dbReference type="EMDB" id="EMD-10674"/>
<dbReference type="EMDB" id="EMD-10690"/>
<dbReference type="EMDB" id="EMD-10709"/>
<dbReference type="EMDB" id="EMD-11098"/>
<dbReference type="EMDB" id="EMD-11099"/>
<dbReference type="EMDB" id="EMD-11100"/>
<dbReference type="EMDB" id="EMD-11288"/>
<dbReference type="EMDB" id="EMD-11289"/>
<dbReference type="EMDB" id="EMD-11292"/>
<dbReference type="EMDB" id="EMD-11299"/>
<dbReference type="EMDB" id="EMD-12189"/>
<dbReference type="EMDB" id="EMD-13094"/>
<dbReference type="EMDB" id="EMD-14181"/>
<dbReference type="EMDB" id="EMD-15113"/>
<dbReference type="EMDB" id="EMD-16880"/>
<dbReference type="EMDB" id="EMD-16902"/>
<dbReference type="EMDB" id="EMD-16905"/>
<dbReference type="EMDB" id="EMD-16908"/>
<dbReference type="EMDB" id="EMD-18382"/>
<dbReference type="EMDB" id="EMD-18539"/>
<dbReference type="EMDB" id="EMD-18765"/>
<dbReference type="EMDB" id="EMD-19330"/>
<dbReference type="EMDB" id="EMD-29252"/>
<dbReference type="EMDB" id="EMD-29253"/>
<dbReference type="EMDB" id="EMD-29254"/>
<dbReference type="EMDB" id="EMD-29255"/>
<dbReference type="EMDB" id="EMD-29256"/>
<dbReference type="EMDB" id="EMD-29257"/>
<dbReference type="EMDB" id="EMD-29258"/>
<dbReference type="EMDB" id="EMD-29259"/>
<dbReference type="EMDB" id="EMD-29260"/>
<dbReference type="EMDB" id="EMD-29261"/>
<dbReference type="EMDB" id="EMD-29262"/>
<dbReference type="EMDB" id="EMD-29265"/>
<dbReference type="EMDB" id="EMD-29266"/>
<dbReference type="EMDB" id="EMD-29267"/>
<dbReference type="EMDB" id="EMD-29268"/>
<dbReference type="EMDB" id="EMD-29269"/>
<dbReference type="EMDB" id="EMD-29271"/>
<dbReference type="EMDB" id="EMD-29272"/>
<dbReference type="EMDB" id="EMD-29273"/>
<dbReference type="EMDB" id="EMD-29274"/>
<dbReference type="EMDB" id="EMD-29275"/>
<dbReference type="EMDB" id="EMD-29276"/>
<dbReference type="EMDB" id="EMD-29277"/>
<dbReference type="EMDB" id="EMD-29757"/>
<dbReference type="EMDB" id="EMD-29758"/>
<dbReference type="EMDB" id="EMD-29759"/>
<dbReference type="EMDB" id="EMD-29760"/>
<dbReference type="EMDB" id="EMD-31465"/>
<dbReference type="EMDB" id="EMD-33329"/>
<dbReference type="EMDB" id="EMD-33330"/>
<dbReference type="EMDB" id="EMD-35370"/>
<dbReference type="EMDB" id="EMD-35371"/>
<dbReference type="EMDB" id="EMD-35375"/>
<dbReference type="EMDB" id="EMD-35413"/>
<dbReference type="EMDB" id="EMD-35414"/>
<dbReference type="EMDB" id="EMD-35596"/>
<dbReference type="EMDB" id="EMD-35597"/>
<dbReference type="EMDB" id="EMD-35599"/>
<dbReference type="EMDB" id="EMD-35639"/>
<dbReference type="EMDB" id="EMD-35649"/>
<dbReference type="EMDB" id="EMD-35651"/>
<dbReference type="EMDB" id="EMD-35672"/>
<dbReference type="EMDB" id="EMD-35673"/>
<dbReference type="EMDB" id="EMD-36178"/>
<dbReference type="EMDB" id="EMD-36179"/>
<dbReference type="EMDB" id="EMD-36180"/>
<dbReference type="EMDB" id="EMD-36181"/>
<dbReference type="EMDB" id="EMD-36838"/>
<dbReference type="EMDB" id="EMD-38629"/>
<dbReference type="EMDB" id="EMD-38630"/>
<dbReference type="EMDB" id="EMD-38631"/>
<dbReference type="EMDB" id="EMD-3883"/>
<dbReference type="EMDB" id="EMD-39455"/>
<dbReference type="EMDB" id="EMD-39456"/>
<dbReference type="EMDB" id="EMD-40205"/>
<dbReference type="EMDB" id="EMD-4070"/>
<dbReference type="EMDB" id="EMD-42351"/>
<dbReference type="EMDB" id="EMD-45170"/>
<dbReference type="EMDB" id="EMD-51132"/>
<dbReference type="EMDB" id="EMD-51452"/>
<dbReference type="EMDB" id="EMD-9701"/>
<dbReference type="EMDB" id="EMD-9702"/>
<dbReference type="EMDB" id="EMD-9703"/>
<dbReference type="SMR" id="P26373"/>
<dbReference type="BioGRID" id="112057">
    <property type="interactions" value="724"/>
</dbReference>
<dbReference type="ComplexPortal" id="CPX-5183">
    <property type="entry name" value="60S cytosolic large ribosomal subunit"/>
</dbReference>
<dbReference type="ComplexPortal" id="CPX-7664">
    <property type="entry name" value="60S cytosolic large ribosomal subunit, testis-specific variant"/>
</dbReference>
<dbReference type="ComplexPortal" id="CPX-7665">
    <property type="entry name" value="60S cytosolic large ribosomal subunit, striated muscle variant"/>
</dbReference>
<dbReference type="CORUM" id="P26373"/>
<dbReference type="FunCoup" id="P26373">
    <property type="interactions" value="3229"/>
</dbReference>
<dbReference type="IntAct" id="P26373">
    <property type="interactions" value="440"/>
</dbReference>
<dbReference type="MINT" id="P26373"/>
<dbReference type="STRING" id="9606.ENSP00000307889"/>
<dbReference type="GlyGen" id="P26373">
    <property type="glycosylation" value="1 site, 1 O-linked glycan (1 site)"/>
</dbReference>
<dbReference type="iPTMnet" id="P26373"/>
<dbReference type="MetOSite" id="P26373"/>
<dbReference type="PhosphoSitePlus" id="P26373"/>
<dbReference type="SwissPalm" id="P26373"/>
<dbReference type="BioMuta" id="RPL13"/>
<dbReference type="DMDM" id="21903462"/>
<dbReference type="jPOST" id="P26373"/>
<dbReference type="MassIVE" id="P26373"/>
<dbReference type="PaxDb" id="9606-ENSP00000307889"/>
<dbReference type="PeptideAtlas" id="P26373"/>
<dbReference type="ProteomicsDB" id="25745"/>
<dbReference type="ProteomicsDB" id="54328">
    <molecule id="P26373-1"/>
</dbReference>
<dbReference type="Pumba" id="P26373"/>
<dbReference type="TopDownProteomics" id="P26373-1">
    <molecule id="P26373-1"/>
</dbReference>
<dbReference type="TopDownProteomics" id="P26373-2">
    <molecule id="P26373-2"/>
</dbReference>
<dbReference type="Antibodypedia" id="17428">
    <property type="antibodies" value="150 antibodies from 27 providers"/>
</dbReference>
<dbReference type="DNASU" id="6137"/>
<dbReference type="Ensembl" id="ENST00000311528.10">
    <molecule id="P26373-1"/>
    <property type="protein sequence ID" value="ENSP00000307889.5"/>
    <property type="gene ID" value="ENSG00000167526.15"/>
</dbReference>
<dbReference type="Ensembl" id="ENST00000393099.4">
    <molecule id="P26373-1"/>
    <property type="protein sequence ID" value="ENSP00000376811.3"/>
    <property type="gene ID" value="ENSG00000167526.15"/>
</dbReference>
<dbReference type="Ensembl" id="ENST00000452368.7">
    <molecule id="P26373-2"/>
    <property type="protein sequence ID" value="ENSP00000438959.2"/>
    <property type="gene ID" value="ENSG00000167526.15"/>
</dbReference>
<dbReference type="Ensembl" id="ENST00000567815.5">
    <molecule id="P26373-1"/>
    <property type="protein sequence ID" value="ENSP00000455009.1"/>
    <property type="gene ID" value="ENSG00000167526.15"/>
</dbReference>
<dbReference type="GeneID" id="6137"/>
<dbReference type="KEGG" id="hsa:6137"/>
<dbReference type="MANE-Select" id="ENST00000311528.10">
    <property type="protein sequence ID" value="ENSP00000307889.5"/>
    <property type="RefSeq nucleotide sequence ID" value="NM_000977.4"/>
    <property type="RefSeq protein sequence ID" value="NP_000968.2"/>
</dbReference>
<dbReference type="UCSC" id="uc002fnm.3">
    <molecule id="P26373-1"/>
    <property type="organism name" value="human"/>
</dbReference>
<dbReference type="AGR" id="HGNC:10303"/>
<dbReference type="CTD" id="6137"/>
<dbReference type="DisGeNET" id="6137"/>
<dbReference type="GeneCards" id="RPL13"/>
<dbReference type="HGNC" id="HGNC:10303">
    <property type="gene designation" value="RPL13"/>
</dbReference>
<dbReference type="HPA" id="ENSG00000167526">
    <property type="expression patterns" value="Low tissue specificity"/>
</dbReference>
<dbReference type="MalaCards" id="RPL13"/>
<dbReference type="MIM" id="113703">
    <property type="type" value="gene"/>
</dbReference>
<dbReference type="MIM" id="618728">
    <property type="type" value="phenotype"/>
</dbReference>
<dbReference type="neXtProt" id="NX_P26373"/>
<dbReference type="OpenTargets" id="ENSG00000167526"/>
<dbReference type="Orphanet" id="370015">
    <property type="disease" value="Spondyloepimetaphyseal dysplasia, Isidor-Toutain type"/>
</dbReference>
<dbReference type="PharmGKB" id="PA34670"/>
<dbReference type="VEuPathDB" id="HostDB:ENSG00000167526"/>
<dbReference type="eggNOG" id="KOG3295">
    <property type="taxonomic scope" value="Eukaryota"/>
</dbReference>
<dbReference type="GeneTree" id="ENSGT00390000007818"/>
<dbReference type="HOGENOM" id="CLU_075696_1_0_1"/>
<dbReference type="InParanoid" id="P26373"/>
<dbReference type="OMA" id="IQKNHFR"/>
<dbReference type="OrthoDB" id="10264538at2759"/>
<dbReference type="PAN-GO" id="P26373">
    <property type="GO annotations" value="3 GO annotations based on evolutionary models"/>
</dbReference>
<dbReference type="PhylomeDB" id="P26373"/>
<dbReference type="TreeFam" id="TF300073"/>
<dbReference type="PathwayCommons" id="P26373"/>
<dbReference type="Reactome" id="R-HSA-156827">
    <property type="pathway name" value="L13a-mediated translational silencing of Ceruloplasmin expression"/>
</dbReference>
<dbReference type="Reactome" id="R-HSA-156902">
    <property type="pathway name" value="Peptide chain elongation"/>
</dbReference>
<dbReference type="Reactome" id="R-HSA-1799339">
    <property type="pathway name" value="SRP-dependent cotranslational protein targeting to membrane"/>
</dbReference>
<dbReference type="Reactome" id="R-HSA-192823">
    <property type="pathway name" value="Viral mRNA Translation"/>
</dbReference>
<dbReference type="Reactome" id="R-HSA-2408557">
    <property type="pathway name" value="Selenocysteine synthesis"/>
</dbReference>
<dbReference type="Reactome" id="R-HSA-6791226">
    <property type="pathway name" value="Major pathway of rRNA processing in the nucleolus and cytosol"/>
</dbReference>
<dbReference type="Reactome" id="R-HSA-72689">
    <property type="pathway name" value="Formation of a pool of free 40S subunits"/>
</dbReference>
<dbReference type="Reactome" id="R-HSA-72706">
    <property type="pathway name" value="GTP hydrolysis and joining of the 60S ribosomal subunit"/>
</dbReference>
<dbReference type="Reactome" id="R-HSA-72764">
    <property type="pathway name" value="Eukaryotic Translation Termination"/>
</dbReference>
<dbReference type="Reactome" id="R-HSA-9010553">
    <property type="pathway name" value="Regulation of expression of SLITs and ROBOs"/>
</dbReference>
<dbReference type="Reactome" id="R-HSA-9633012">
    <property type="pathway name" value="Response of EIF2AK4 (GCN2) to amino acid deficiency"/>
</dbReference>
<dbReference type="Reactome" id="R-HSA-975956">
    <property type="pathway name" value="Nonsense Mediated Decay (NMD) independent of the Exon Junction Complex (EJC)"/>
</dbReference>
<dbReference type="Reactome" id="R-HSA-975957">
    <property type="pathway name" value="Nonsense Mediated Decay (NMD) enhanced by the Exon Junction Complex (EJC)"/>
</dbReference>
<dbReference type="SignaLink" id="P26373"/>
<dbReference type="SIGNOR" id="P26373"/>
<dbReference type="BioGRID-ORCS" id="6137">
    <property type="hits" value="860 hits in 1136 CRISPR screens"/>
</dbReference>
<dbReference type="CD-CODE" id="232F8A39">
    <property type="entry name" value="P-body"/>
</dbReference>
<dbReference type="CD-CODE" id="91857CE7">
    <property type="entry name" value="Nucleolus"/>
</dbReference>
<dbReference type="CD-CODE" id="FB4E32DD">
    <property type="entry name" value="Presynaptic clusters and postsynaptic densities"/>
</dbReference>
<dbReference type="ChiTaRS" id="RPL13">
    <property type="organism name" value="human"/>
</dbReference>
<dbReference type="GeneWiki" id="RPL13"/>
<dbReference type="GenomeRNAi" id="6137"/>
<dbReference type="Pharos" id="P26373">
    <property type="development level" value="Tbio"/>
</dbReference>
<dbReference type="PRO" id="PR:P26373"/>
<dbReference type="Proteomes" id="UP000005640">
    <property type="component" value="Chromosome 16"/>
</dbReference>
<dbReference type="RNAct" id="P26373">
    <property type="molecule type" value="protein"/>
</dbReference>
<dbReference type="Bgee" id="ENSG00000167526">
    <property type="expression patterns" value="Expressed in left ovary and 205 other cell types or tissues"/>
</dbReference>
<dbReference type="ExpressionAtlas" id="P26373">
    <property type="expression patterns" value="baseline and differential"/>
</dbReference>
<dbReference type="GO" id="GO:0005737">
    <property type="term" value="C:cytoplasm"/>
    <property type="evidence" value="ECO:0000303"/>
    <property type="project" value="ComplexPortal"/>
</dbReference>
<dbReference type="GO" id="GO:0005829">
    <property type="term" value="C:cytosol"/>
    <property type="evidence" value="ECO:0000314"/>
    <property type="project" value="HPA"/>
</dbReference>
<dbReference type="GO" id="GO:0022625">
    <property type="term" value="C:cytosolic large ribosomal subunit"/>
    <property type="evidence" value="ECO:0000314"/>
    <property type="project" value="UniProtKB"/>
</dbReference>
<dbReference type="GO" id="GO:0022626">
    <property type="term" value="C:cytosolic ribosome"/>
    <property type="evidence" value="ECO:0000314"/>
    <property type="project" value="FlyBase"/>
</dbReference>
<dbReference type="GO" id="GO:0005783">
    <property type="term" value="C:endoplasmic reticulum"/>
    <property type="evidence" value="ECO:0000314"/>
    <property type="project" value="HPA"/>
</dbReference>
<dbReference type="GO" id="GO:0016020">
    <property type="term" value="C:membrane"/>
    <property type="evidence" value="ECO:0007005"/>
    <property type="project" value="UniProtKB"/>
</dbReference>
<dbReference type="GO" id="GO:0005730">
    <property type="term" value="C:nucleolus"/>
    <property type="evidence" value="ECO:0000314"/>
    <property type="project" value="HPA"/>
</dbReference>
<dbReference type="GO" id="GO:0005634">
    <property type="term" value="C:nucleus"/>
    <property type="evidence" value="ECO:0007005"/>
    <property type="project" value="UniProtKB"/>
</dbReference>
<dbReference type="GO" id="GO:0045202">
    <property type="term" value="C:synapse"/>
    <property type="evidence" value="ECO:0007669"/>
    <property type="project" value="Ensembl"/>
</dbReference>
<dbReference type="GO" id="GO:0003723">
    <property type="term" value="F:RNA binding"/>
    <property type="evidence" value="ECO:0007005"/>
    <property type="project" value="UniProtKB"/>
</dbReference>
<dbReference type="GO" id="GO:0003735">
    <property type="term" value="F:structural constituent of ribosome"/>
    <property type="evidence" value="ECO:0000314"/>
    <property type="project" value="UniProtKB"/>
</dbReference>
<dbReference type="GO" id="GO:0001824">
    <property type="term" value="P:blastocyst development"/>
    <property type="evidence" value="ECO:0007669"/>
    <property type="project" value="Ensembl"/>
</dbReference>
<dbReference type="GO" id="GO:0060348">
    <property type="term" value="P:bone development"/>
    <property type="evidence" value="ECO:0000315"/>
    <property type="project" value="UniProtKB"/>
</dbReference>
<dbReference type="GO" id="GO:0002181">
    <property type="term" value="P:cytoplasmic translation"/>
    <property type="evidence" value="ECO:0000303"/>
    <property type="project" value="ComplexPortal"/>
</dbReference>
<dbReference type="GO" id="GO:0006412">
    <property type="term" value="P:translation"/>
    <property type="evidence" value="ECO:0000304"/>
    <property type="project" value="ProtInc"/>
</dbReference>
<dbReference type="FunFam" id="1.20.5.110:FF:000003">
    <property type="entry name" value="60S ribosomal protein L13"/>
    <property type="match status" value="1"/>
</dbReference>
<dbReference type="Gene3D" id="1.20.5.110">
    <property type="match status" value="1"/>
</dbReference>
<dbReference type="HAMAP" id="MF_00499">
    <property type="entry name" value="Ribosomal_eL13"/>
    <property type="match status" value="1"/>
</dbReference>
<dbReference type="InterPro" id="IPR001380">
    <property type="entry name" value="Ribosomal_eL13"/>
</dbReference>
<dbReference type="InterPro" id="IPR018256">
    <property type="entry name" value="Ribosomal_eL13_CS"/>
</dbReference>
<dbReference type="PANTHER" id="PTHR11722">
    <property type="entry name" value="60S RIBOSOMAL PROTEIN L13"/>
    <property type="match status" value="1"/>
</dbReference>
<dbReference type="PANTHER" id="PTHR11722:SF4">
    <property type="entry name" value="LARGE RIBOSOMAL SUBUNIT PROTEIN EL13"/>
    <property type="match status" value="1"/>
</dbReference>
<dbReference type="Pfam" id="PF01294">
    <property type="entry name" value="Ribosomal_L13e"/>
    <property type="match status" value="1"/>
</dbReference>
<dbReference type="PROSITE" id="PS01104">
    <property type="entry name" value="RIBOSOMAL_L13E"/>
    <property type="match status" value="1"/>
</dbReference>
<proteinExistence type="evidence at protein level"/>
<reference key="1">
    <citation type="journal article" date="1992" name="Hum. Mol. Genet.">
        <title>Isolation and characterization of a novel gene with differential expression in benign and malignant human breast tumours.</title>
        <authorList>
            <person name="Adams S.M."/>
            <person name="Helps N.R."/>
            <person name="Sharp M.G.F."/>
            <person name="Brammar W.J."/>
            <person name="Walker R.A."/>
            <person name="Varley J.M."/>
        </authorList>
    </citation>
    <scope>NUCLEOTIDE SEQUENCE [MRNA] (ISOFORM 1)</scope>
    <scope>TISSUE SPECIFICITY</scope>
    <scope>VARIANT THR-112</scope>
</reference>
<reference key="2">
    <citation type="submission" date="2001-05" db="EMBL/GenBank/DDBJ databases">
        <title>Identification of immuno-peptidmics that are recognized by tumor-reactive CTL generated from TIL of colon cancer patients.</title>
        <authorList>
            <person name="Shichijo S."/>
            <person name="Itoh K."/>
        </authorList>
    </citation>
    <scope>NUCLEOTIDE SEQUENCE [LARGE SCALE MRNA] (ISOFORM 1)</scope>
    <source>
        <tissue>Colon adenocarcinoma</tissue>
    </source>
</reference>
<reference key="3">
    <citation type="journal article" date="2004" name="Nat. Genet.">
        <title>Complete sequencing and characterization of 21,243 full-length human cDNAs.</title>
        <authorList>
            <person name="Ota T."/>
            <person name="Suzuki Y."/>
            <person name="Nishikawa T."/>
            <person name="Otsuki T."/>
            <person name="Sugiyama T."/>
            <person name="Irie R."/>
            <person name="Wakamatsu A."/>
            <person name="Hayashi K."/>
            <person name="Sato H."/>
            <person name="Nagai K."/>
            <person name="Kimura K."/>
            <person name="Makita H."/>
            <person name="Sekine M."/>
            <person name="Obayashi M."/>
            <person name="Nishi T."/>
            <person name="Shibahara T."/>
            <person name="Tanaka T."/>
            <person name="Ishii S."/>
            <person name="Yamamoto J."/>
            <person name="Saito K."/>
            <person name="Kawai Y."/>
            <person name="Isono Y."/>
            <person name="Nakamura Y."/>
            <person name="Nagahari K."/>
            <person name="Murakami K."/>
            <person name="Yasuda T."/>
            <person name="Iwayanagi T."/>
            <person name="Wagatsuma M."/>
            <person name="Shiratori A."/>
            <person name="Sudo H."/>
            <person name="Hosoiri T."/>
            <person name="Kaku Y."/>
            <person name="Kodaira H."/>
            <person name="Kondo H."/>
            <person name="Sugawara M."/>
            <person name="Takahashi M."/>
            <person name="Kanda K."/>
            <person name="Yokoi T."/>
            <person name="Furuya T."/>
            <person name="Kikkawa E."/>
            <person name="Omura Y."/>
            <person name="Abe K."/>
            <person name="Kamihara K."/>
            <person name="Katsuta N."/>
            <person name="Sato K."/>
            <person name="Tanikawa M."/>
            <person name="Yamazaki M."/>
            <person name="Ninomiya K."/>
            <person name="Ishibashi T."/>
            <person name="Yamashita H."/>
            <person name="Murakawa K."/>
            <person name="Fujimori K."/>
            <person name="Tanai H."/>
            <person name="Kimata M."/>
            <person name="Watanabe M."/>
            <person name="Hiraoka S."/>
            <person name="Chiba Y."/>
            <person name="Ishida S."/>
            <person name="Ono Y."/>
            <person name="Takiguchi S."/>
            <person name="Watanabe S."/>
            <person name="Yosida M."/>
            <person name="Hotuta T."/>
            <person name="Kusano J."/>
            <person name="Kanehori K."/>
            <person name="Takahashi-Fujii A."/>
            <person name="Hara H."/>
            <person name="Tanase T.-O."/>
            <person name="Nomura Y."/>
            <person name="Togiya S."/>
            <person name="Komai F."/>
            <person name="Hara R."/>
            <person name="Takeuchi K."/>
            <person name="Arita M."/>
            <person name="Imose N."/>
            <person name="Musashino K."/>
            <person name="Yuuki H."/>
            <person name="Oshima A."/>
            <person name="Sasaki N."/>
            <person name="Aotsuka S."/>
            <person name="Yoshikawa Y."/>
            <person name="Matsunawa H."/>
            <person name="Ichihara T."/>
            <person name="Shiohata N."/>
            <person name="Sano S."/>
            <person name="Moriya S."/>
            <person name="Momiyama H."/>
            <person name="Satoh N."/>
            <person name="Takami S."/>
            <person name="Terashima Y."/>
            <person name="Suzuki O."/>
            <person name="Nakagawa S."/>
            <person name="Senoh A."/>
            <person name="Mizoguchi H."/>
            <person name="Goto Y."/>
            <person name="Shimizu F."/>
            <person name="Wakebe H."/>
            <person name="Hishigaki H."/>
            <person name="Watanabe T."/>
            <person name="Sugiyama A."/>
            <person name="Takemoto M."/>
            <person name="Kawakami B."/>
            <person name="Yamazaki M."/>
            <person name="Watanabe K."/>
            <person name="Kumagai A."/>
            <person name="Itakura S."/>
            <person name="Fukuzumi Y."/>
            <person name="Fujimori Y."/>
            <person name="Komiyama M."/>
            <person name="Tashiro H."/>
            <person name="Tanigami A."/>
            <person name="Fujiwara T."/>
            <person name="Ono T."/>
            <person name="Yamada K."/>
            <person name="Fujii Y."/>
            <person name="Ozaki K."/>
            <person name="Hirao M."/>
            <person name="Ohmori Y."/>
            <person name="Kawabata A."/>
            <person name="Hikiji T."/>
            <person name="Kobatake N."/>
            <person name="Inagaki H."/>
            <person name="Ikema Y."/>
            <person name="Okamoto S."/>
            <person name="Okitani R."/>
            <person name="Kawakami T."/>
            <person name="Noguchi S."/>
            <person name="Itoh T."/>
            <person name="Shigeta K."/>
            <person name="Senba T."/>
            <person name="Matsumura K."/>
            <person name="Nakajima Y."/>
            <person name="Mizuno T."/>
            <person name="Morinaga M."/>
            <person name="Sasaki M."/>
            <person name="Togashi T."/>
            <person name="Oyama M."/>
            <person name="Hata H."/>
            <person name="Watanabe M."/>
            <person name="Komatsu T."/>
            <person name="Mizushima-Sugano J."/>
            <person name="Satoh T."/>
            <person name="Shirai Y."/>
            <person name="Takahashi Y."/>
            <person name="Nakagawa K."/>
            <person name="Okumura K."/>
            <person name="Nagase T."/>
            <person name="Nomura N."/>
            <person name="Kikuchi H."/>
            <person name="Masuho Y."/>
            <person name="Yamashita R."/>
            <person name="Nakai K."/>
            <person name="Yada T."/>
            <person name="Nakamura Y."/>
            <person name="Ohara O."/>
            <person name="Isogai T."/>
            <person name="Sugano S."/>
        </authorList>
    </citation>
    <scope>NUCLEOTIDE SEQUENCE [LARGE SCALE MRNA] (ISOFORM 2)</scope>
    <source>
        <tissue>Brain</tissue>
    </source>
</reference>
<reference key="4">
    <citation type="journal article" date="2004" name="Nature">
        <title>The sequence and analysis of duplication-rich human chromosome 16.</title>
        <authorList>
            <person name="Martin J."/>
            <person name="Han C."/>
            <person name="Gordon L.A."/>
            <person name="Terry A."/>
            <person name="Prabhakar S."/>
            <person name="She X."/>
            <person name="Xie G."/>
            <person name="Hellsten U."/>
            <person name="Chan Y.M."/>
            <person name="Altherr M."/>
            <person name="Couronne O."/>
            <person name="Aerts A."/>
            <person name="Bajorek E."/>
            <person name="Black S."/>
            <person name="Blumer H."/>
            <person name="Branscomb E."/>
            <person name="Brown N.C."/>
            <person name="Bruno W.J."/>
            <person name="Buckingham J.M."/>
            <person name="Callen D.F."/>
            <person name="Campbell C.S."/>
            <person name="Campbell M.L."/>
            <person name="Campbell E.W."/>
            <person name="Caoile C."/>
            <person name="Challacombe J.F."/>
            <person name="Chasteen L.A."/>
            <person name="Chertkov O."/>
            <person name="Chi H.C."/>
            <person name="Christensen M."/>
            <person name="Clark L.M."/>
            <person name="Cohn J.D."/>
            <person name="Denys M."/>
            <person name="Detter J.C."/>
            <person name="Dickson M."/>
            <person name="Dimitrijevic-Bussod M."/>
            <person name="Escobar J."/>
            <person name="Fawcett J.J."/>
            <person name="Flowers D."/>
            <person name="Fotopulos D."/>
            <person name="Glavina T."/>
            <person name="Gomez M."/>
            <person name="Gonzales E."/>
            <person name="Goodstein D."/>
            <person name="Goodwin L.A."/>
            <person name="Grady D.L."/>
            <person name="Grigoriev I."/>
            <person name="Groza M."/>
            <person name="Hammon N."/>
            <person name="Hawkins T."/>
            <person name="Haydu L."/>
            <person name="Hildebrand C.E."/>
            <person name="Huang W."/>
            <person name="Israni S."/>
            <person name="Jett J."/>
            <person name="Jewett P.B."/>
            <person name="Kadner K."/>
            <person name="Kimball H."/>
            <person name="Kobayashi A."/>
            <person name="Krawczyk M.-C."/>
            <person name="Leyba T."/>
            <person name="Longmire J.L."/>
            <person name="Lopez F."/>
            <person name="Lou Y."/>
            <person name="Lowry S."/>
            <person name="Ludeman T."/>
            <person name="Manohar C.F."/>
            <person name="Mark G.A."/>
            <person name="McMurray K.L."/>
            <person name="Meincke L.J."/>
            <person name="Morgan J."/>
            <person name="Moyzis R.K."/>
            <person name="Mundt M.O."/>
            <person name="Munk A.C."/>
            <person name="Nandkeshwar R.D."/>
            <person name="Pitluck S."/>
            <person name="Pollard M."/>
            <person name="Predki P."/>
            <person name="Parson-Quintana B."/>
            <person name="Ramirez L."/>
            <person name="Rash S."/>
            <person name="Retterer J."/>
            <person name="Ricke D.O."/>
            <person name="Robinson D.L."/>
            <person name="Rodriguez A."/>
            <person name="Salamov A."/>
            <person name="Saunders E.H."/>
            <person name="Scott D."/>
            <person name="Shough T."/>
            <person name="Stallings R.L."/>
            <person name="Stalvey M."/>
            <person name="Sutherland R.D."/>
            <person name="Tapia R."/>
            <person name="Tesmer J.G."/>
            <person name="Thayer N."/>
            <person name="Thompson L.S."/>
            <person name="Tice H."/>
            <person name="Torney D.C."/>
            <person name="Tran-Gyamfi M."/>
            <person name="Tsai M."/>
            <person name="Ulanovsky L.E."/>
            <person name="Ustaszewska A."/>
            <person name="Vo N."/>
            <person name="White P.S."/>
            <person name="Williams A.L."/>
            <person name="Wills P.L."/>
            <person name="Wu J.-R."/>
            <person name="Wu K."/>
            <person name="Yang J."/>
            <person name="DeJong P."/>
            <person name="Bruce D."/>
            <person name="Doggett N.A."/>
            <person name="Deaven L."/>
            <person name="Schmutz J."/>
            <person name="Grimwood J."/>
            <person name="Richardson P."/>
            <person name="Rokhsar D.S."/>
            <person name="Eichler E.E."/>
            <person name="Gilna P."/>
            <person name="Lucas S.M."/>
            <person name="Myers R.M."/>
            <person name="Rubin E.M."/>
            <person name="Pennacchio L.A."/>
        </authorList>
    </citation>
    <scope>NUCLEOTIDE SEQUENCE [LARGE SCALE GENOMIC DNA]</scope>
</reference>
<reference key="5">
    <citation type="journal article" date="2004" name="Genome Res.">
        <title>The status, quality, and expansion of the NIH full-length cDNA project: the Mammalian Gene Collection (MGC).</title>
        <authorList>
            <consortium name="The MGC Project Team"/>
        </authorList>
    </citation>
    <scope>NUCLEOTIDE SEQUENCE [LARGE SCALE MRNA] (ISOFORM 1)</scope>
    <scope>VARIANT THR-112</scope>
    <source>
        <tissue>Blood vessel</tissue>
        <tissue>Brain</tissue>
        <tissue>Cervix</tissue>
        <tissue>Lung</tissue>
        <tissue>Lymph</tissue>
        <tissue>Pancreas</tissue>
        <tissue>Placenta</tissue>
        <tissue>Uterus</tissue>
    </source>
</reference>
<reference key="6">
    <citation type="journal article" date="2003" name="Nature">
        <title>Proteomic characterization of the human centrosome by protein correlation profiling.</title>
        <authorList>
            <person name="Andersen J.S."/>
            <person name="Wilkinson C.J."/>
            <person name="Mayor T."/>
            <person name="Mortensen P."/>
            <person name="Nigg E.A."/>
            <person name="Mann M."/>
        </authorList>
    </citation>
    <scope>IDENTIFICATION BY MASS SPECTROMETRY</scope>
    <source>
        <tissue>Lymphoblast</tissue>
    </source>
</reference>
<reference key="7">
    <citation type="journal article" date="2008" name="Mol. Cell">
        <title>Kinase-selective enrichment enables quantitative phosphoproteomics of the kinome across the cell cycle.</title>
        <authorList>
            <person name="Daub H."/>
            <person name="Olsen J.V."/>
            <person name="Bairlein M."/>
            <person name="Gnad F."/>
            <person name="Oppermann F.S."/>
            <person name="Korner R."/>
            <person name="Greff Z."/>
            <person name="Keri G."/>
            <person name="Stemmann O."/>
            <person name="Mann M."/>
        </authorList>
    </citation>
    <scope>PHOSPHORYLATION [LARGE SCALE ANALYSIS] AT SER-77</scope>
    <scope>IDENTIFICATION BY MASS SPECTROMETRY [LARGE SCALE ANALYSIS]</scope>
    <source>
        <tissue>Cervix carcinoma</tissue>
    </source>
</reference>
<reference key="8">
    <citation type="journal article" date="2008" name="Proc. Natl. Acad. Sci. U.S.A.">
        <title>A quantitative atlas of mitotic phosphorylation.</title>
        <authorList>
            <person name="Dephoure N."/>
            <person name="Zhou C."/>
            <person name="Villen J."/>
            <person name="Beausoleil S.A."/>
            <person name="Bakalarski C.E."/>
            <person name="Elledge S.J."/>
            <person name="Gygi S.P."/>
        </authorList>
    </citation>
    <scope>IDENTIFICATION BY MASS SPECTROMETRY [LARGE SCALE ANALYSIS]</scope>
    <source>
        <tissue>Cervix carcinoma</tissue>
    </source>
</reference>
<reference key="9">
    <citation type="journal article" date="2009" name="Science">
        <title>Lysine acetylation targets protein complexes and co-regulates major cellular functions.</title>
        <authorList>
            <person name="Choudhary C."/>
            <person name="Kumar C."/>
            <person name="Gnad F."/>
            <person name="Nielsen M.L."/>
            <person name="Rehman M."/>
            <person name="Walther T.C."/>
            <person name="Olsen J.V."/>
            <person name="Mann M."/>
        </authorList>
    </citation>
    <scope>ACETYLATION [LARGE SCALE ANALYSIS] AT LYS-16 AND LYS-177</scope>
    <scope>IDENTIFICATION BY MASS SPECTROMETRY [LARGE SCALE ANALYSIS]</scope>
</reference>
<reference key="10">
    <citation type="journal article" date="2010" name="Sci. Signal.">
        <title>Quantitative phosphoproteomics reveals widespread full phosphorylation site occupancy during mitosis.</title>
        <authorList>
            <person name="Olsen J.V."/>
            <person name="Vermeulen M."/>
            <person name="Santamaria A."/>
            <person name="Kumar C."/>
            <person name="Miller M.L."/>
            <person name="Jensen L.J."/>
            <person name="Gnad F."/>
            <person name="Cox J."/>
            <person name="Jensen T.S."/>
            <person name="Nigg E.A."/>
            <person name="Brunak S."/>
            <person name="Mann M."/>
        </authorList>
    </citation>
    <scope>PHOSPHORYLATION [LARGE SCALE ANALYSIS] AT SER-106</scope>
    <scope>IDENTIFICATION BY MASS SPECTROMETRY [LARGE SCALE ANALYSIS]</scope>
    <source>
        <tissue>Cervix carcinoma</tissue>
    </source>
</reference>
<reference key="11">
    <citation type="journal article" date="2011" name="BMC Syst. Biol.">
        <title>Initial characterization of the human central proteome.</title>
        <authorList>
            <person name="Burkard T.R."/>
            <person name="Planyavsky M."/>
            <person name="Kaupe I."/>
            <person name="Breitwieser F.P."/>
            <person name="Buerckstuemmer T."/>
            <person name="Bennett K.L."/>
            <person name="Superti-Furga G."/>
            <person name="Colinge J."/>
        </authorList>
    </citation>
    <scope>IDENTIFICATION BY MASS SPECTROMETRY [LARGE SCALE ANALYSIS]</scope>
</reference>
<reference key="12">
    <citation type="journal article" date="2011" name="Sci. Signal.">
        <title>System-wide temporal characterization of the proteome and phosphoproteome of human embryonic stem cell differentiation.</title>
        <authorList>
            <person name="Rigbolt K.T."/>
            <person name="Prokhorova T.A."/>
            <person name="Akimov V."/>
            <person name="Henningsen J."/>
            <person name="Johansen P.T."/>
            <person name="Kratchmarova I."/>
            <person name="Kassem M."/>
            <person name="Mann M."/>
            <person name="Olsen J.V."/>
            <person name="Blagoev B."/>
        </authorList>
    </citation>
    <scope>IDENTIFICATION BY MASS SPECTROMETRY [LARGE SCALE ANALYSIS]</scope>
</reference>
<reference key="13">
    <citation type="journal article" date="2013" name="J. Proteome Res.">
        <title>Toward a comprehensive characterization of a human cancer cell phosphoproteome.</title>
        <authorList>
            <person name="Zhou H."/>
            <person name="Di Palma S."/>
            <person name="Preisinger C."/>
            <person name="Peng M."/>
            <person name="Polat A.N."/>
            <person name="Heck A.J."/>
            <person name="Mohammed S."/>
        </authorList>
    </citation>
    <scope>PHOSPHORYLATION [LARGE SCALE ANALYSIS] AT SER-52; SER-77 AND SER-106</scope>
    <scope>IDENTIFICATION BY MASS SPECTROMETRY [LARGE SCALE ANALYSIS]</scope>
    <source>
        <tissue>Cervix carcinoma</tissue>
        <tissue>Erythroleukemia</tissue>
    </source>
</reference>
<reference key="14">
    <citation type="journal article" date="2014" name="Curr. Opin. Struct. Biol.">
        <title>A new system for naming ribosomal proteins.</title>
        <authorList>
            <person name="Ban N."/>
            <person name="Beckmann R."/>
            <person name="Cate J.H.D."/>
            <person name="Dinman J.D."/>
            <person name="Dragon F."/>
            <person name="Ellis S.R."/>
            <person name="Lafontaine D.L.J."/>
            <person name="Lindahl L."/>
            <person name="Liljas A."/>
            <person name="Lipton J.M."/>
            <person name="McAlear M.A."/>
            <person name="Moore P.B."/>
            <person name="Noller H.F."/>
            <person name="Ortega J."/>
            <person name="Panse V.G."/>
            <person name="Ramakrishnan V."/>
            <person name="Spahn C.M.T."/>
            <person name="Steitz T.A."/>
            <person name="Tchorzewski M."/>
            <person name="Tollervey D."/>
            <person name="Warren A.J."/>
            <person name="Williamson J.R."/>
            <person name="Wilson D."/>
            <person name="Yonath A."/>
            <person name="Yusupov M."/>
        </authorList>
    </citation>
    <scope>NOMENCLATURE</scope>
</reference>
<reference key="15">
    <citation type="journal article" date="2014" name="Proc. Natl. Acad. Sci. U.S.A.">
        <title>Mapping of SUMO sites and analysis of SUMOylation changes induced by external stimuli.</title>
        <authorList>
            <person name="Impens F."/>
            <person name="Radoshevich L."/>
            <person name="Cossart P."/>
            <person name="Ribet D."/>
        </authorList>
    </citation>
    <scope>SUMOYLATION [LARGE SCALE ANALYSIS] AT LYS-174</scope>
    <scope>IDENTIFICATION BY MASS SPECTROMETRY [LARGE SCALE ANALYSIS]</scope>
</reference>
<reference key="16">
    <citation type="journal article" date="2015" name="Proteomics">
        <title>N-terminome analysis of the human mitochondrial proteome.</title>
        <authorList>
            <person name="Vaca Jacome A.S."/>
            <person name="Rabilloud T."/>
            <person name="Schaeffer-Reiss C."/>
            <person name="Rompais M."/>
            <person name="Ayoub D."/>
            <person name="Lane L."/>
            <person name="Bairoch A."/>
            <person name="Van Dorsselaer A."/>
            <person name="Carapito C."/>
        </authorList>
    </citation>
    <scope>IDENTIFICATION BY MASS SPECTROMETRY [LARGE SCALE ANALYSIS]</scope>
</reference>
<reference key="17">
    <citation type="journal article" date="2017" name="Nat. Struct. Mol. Biol.">
        <title>Site-specific mapping of the human SUMO proteome reveals co-modification with phosphorylation.</title>
        <authorList>
            <person name="Hendriks I.A."/>
            <person name="Lyon D."/>
            <person name="Young C."/>
            <person name="Jensen L.J."/>
            <person name="Vertegaal A.C."/>
            <person name="Nielsen M.L."/>
        </authorList>
    </citation>
    <scope>SUMOYLATION [LARGE SCALE ANALYSIS] AT LYS-123; LYS-145; LYS-174 AND LYS-177</scope>
    <scope>IDENTIFICATION BY MASS SPECTROMETRY [LARGE SCALE ANALYSIS]</scope>
</reference>
<reference key="18">
    <citation type="journal article" date="2019" name="Am. J. Hum. Genet.">
        <title>RPL13 variants cause spondyloepimetaphyseal dysplasia with severe short stature.</title>
        <authorList>
            <person name="Le Caignec C."/>
            <person name="Ory B."/>
            <person name="Lamoureux F."/>
            <person name="O'Donohue M.F."/>
            <person name="Orgebin E."/>
            <person name="Lindenbaum P."/>
            <person name="Teletchea S."/>
            <person name="Saby M."/>
            <person name="Hurst A."/>
            <person name="Nelson K."/>
            <person name="Gilbert S.R."/>
            <person name="Wilnai Y."/>
            <person name="Zeitlin L."/>
            <person name="Segev E."/>
            <person name="Tesfaye R."/>
            <person name="Nizon M."/>
            <person name="Cogne B."/>
            <person name="Bezieau S."/>
            <person name="Geoffroy L."/>
            <person name="Hamel A."/>
            <person name="Mayrargue E."/>
            <person name="de Courtivron B."/>
            <person name="Decock-Giraudaud A."/>
            <person name="Charrier C."/>
            <person name="Pichon O."/>
            <person name="Retiere C."/>
            <person name="Redon R."/>
            <person name="Pepler A."/>
            <person name="McWalter K."/>
            <person name="Da Costa L."/>
            <person name="Toutain A."/>
            <person name="Gleizes P.E."/>
            <person name="Baud'huin M."/>
            <person name="Isidor B."/>
        </authorList>
    </citation>
    <scope>INVOLVEMENT IN SEMDIST</scope>
    <scope>VARIANT SEMDIST PRO-183</scope>
    <scope>FUNCTION</scope>
    <scope>SUBUNIT</scope>
    <scope>SUBCELLULAR LOCATION</scope>
</reference>
<reference key="19">
    <citation type="journal article" date="2013" name="Nature">
        <title>Structures of the human and Drosophila 80S ribosome.</title>
        <authorList>
            <person name="Anger A.M."/>
            <person name="Armache J.P."/>
            <person name="Berninghausen O."/>
            <person name="Habeck M."/>
            <person name="Subklewe M."/>
            <person name="Wilson D.N."/>
            <person name="Beckmann R."/>
        </authorList>
    </citation>
    <scope>STRUCTURE BY ELECTRON MICROSCOPY (5.0 ANGSTROMS) OF 80S RIBOSOME</scope>
    <scope>FUNCTION</scope>
    <scope>SUBUNIT</scope>
    <scope>SUBCELLULAR LOCATION</scope>
</reference>
<reference evidence="10 11 12 13" key="20">
    <citation type="journal article" date="2020" name="Nat. Commun.">
        <title>Structural snapshots of human pre-60S ribosomal particles before and after nuclear export.</title>
        <authorList>
            <person name="Liang X."/>
            <person name="Zuo M.Q."/>
            <person name="Zhang Y."/>
            <person name="Li N."/>
            <person name="Ma C."/>
            <person name="Dong M.Q."/>
            <person name="Gao N."/>
        </authorList>
    </citation>
    <scope>STRUCTURE BY ELECTRON MICROSCOPY (3.09 ANGSTROMS)</scope>
    <scope>FUNCTION</scope>
    <scope>SUBUNIT</scope>
</reference>
<comment type="function">
    <text evidence="3 4 5">Component of the ribosome, a large ribonucleoprotein complex responsible for the synthesis of proteins in the cell (PubMed:23636399, PubMed:31630789, PubMed:32669547). The small ribosomal subunit (SSU) binds messenger RNAs (mRNAs) and translates the encoded message by selecting cognate aminoacyl-transfer RNA (tRNA) molecules (Probable). The large subunit (LSU) contains the ribosomal catalytic site termed the peptidyl transferase center (PTC), which catalyzes the formation of peptide bonds, thereby polymerizing the amino acids delivered by tRNAs into a polypeptide chain (Probable). The nascent polypeptides leave the ribosome through a tunnel in the LSU and interact with protein factors that function in enzymatic processing, targeting, and the membrane insertion of nascent chains at the exit of the ribosomal tunnel (Probable). As part of the LSU, it is probably required for its formation and the maturation of rRNAs (PubMed:31630789). Plays a role in bone development (PubMed:31630789).</text>
</comment>
<comment type="subunit">
    <text evidence="3 5 9">Component of the 60S large ribosomal subunit (LSU).</text>
</comment>
<comment type="interaction">
    <interactant intactId="EBI-356849">
        <id>P26373</id>
    </interactant>
    <interactant intactId="EBI-1052326">
        <id>Q8TDN6</id>
        <label>BRIX1</label>
    </interactant>
    <organismsDiffer>false</organismsDiffer>
    <experiments>3</experiments>
</comment>
<comment type="interaction">
    <interactant intactId="EBI-356849">
        <id>P26373</id>
    </interactant>
    <interactant intactId="EBI-739624">
        <id>Q8NHQ1</id>
        <label>CEP70</label>
    </interactant>
    <organismsDiffer>false</organismsDiffer>
    <experiments>3</experiments>
</comment>
<comment type="interaction">
    <interactant intactId="EBI-356849">
        <id>P26373</id>
    </interactant>
    <interactant intactId="EBI-466029">
        <id>P42858</id>
        <label>HTT</label>
    </interactant>
    <organismsDiffer>false</organismsDiffer>
    <experiments>10</experiments>
</comment>
<comment type="interaction">
    <interactant intactId="EBI-356849">
        <id>P26373</id>
    </interactant>
    <interactant intactId="EBI-5323863">
        <id>Q5S007</id>
        <label>LRRK2</label>
    </interactant>
    <organismsDiffer>false</organismsDiffer>
    <experiments>4</experiments>
</comment>
<comment type="interaction">
    <interactant intactId="EBI-356849">
        <id>P26373</id>
    </interactant>
    <interactant intactId="EBI-720441">
        <id>Q96DV4</id>
        <label>MRPL38</label>
    </interactant>
    <organismsDiffer>false</organismsDiffer>
    <experiments>2</experiments>
</comment>
<comment type="interaction">
    <interactant intactId="EBI-356849">
        <id>P26373</id>
    </interactant>
    <interactant intactId="EBI-389883">
        <id>P16333</id>
        <label>NCK1</label>
    </interactant>
    <organismsDiffer>false</organismsDiffer>
    <experiments>2</experiments>
</comment>
<comment type="interaction">
    <interactant intactId="EBI-356849">
        <id>P26373</id>
    </interactant>
    <interactant intactId="EBI-79464">
        <id>P27986</id>
        <label>PIK3R1</label>
    </interactant>
    <organismsDiffer>false</organismsDiffer>
    <experiments>2</experiments>
</comment>
<comment type="interaction">
    <interactant intactId="EBI-356849">
        <id>P26373</id>
    </interactant>
    <interactant intactId="EBI-706637">
        <id>Q15554</id>
        <label>TERF2</label>
    </interactant>
    <organismsDiffer>false</organismsDiffer>
    <experiments>2</experiments>
</comment>
<comment type="subcellular location">
    <subcellularLocation>
        <location evidence="3 9">Cytoplasm</location>
    </subcellularLocation>
</comment>
<comment type="alternative products">
    <event type="alternative splicing"/>
    <isoform>
        <id>P26373-1</id>
        <name>1</name>
        <sequence type="displayed"/>
    </isoform>
    <isoform>
        <id>P26373-2</id>
        <name>2</name>
        <sequence type="described" ref="VSP_046028"/>
    </isoform>
</comment>
<comment type="tissue specificity">
    <text evidence="1">Higher levels of expression in benign breast lesions than in carcinomas.</text>
</comment>
<comment type="disease" evidence="4">
    <disease id="DI-05729">
        <name>Spondyloepimetaphyseal dysplasia, Isidor-Toutain type</name>
        <acronym>SEMDIST</acronym>
        <description>An autosomal dominant bone disease characterized by early postnatal growth deficiency, severe short stature, genu varum, platyspondyly and severe epiphyseal and metaphyseal changes in the lower limbs.</description>
        <dbReference type="MIM" id="618728"/>
    </disease>
    <text>The disease is caused by variants affecting the gene represented in this entry.</text>
</comment>
<comment type="similarity">
    <text evidence="8">Belongs to the eukaryotic ribosomal protein eL13 family.</text>
</comment>
<organism>
    <name type="scientific">Homo sapiens</name>
    <name type="common">Human</name>
    <dbReference type="NCBI Taxonomy" id="9606"/>
    <lineage>
        <taxon>Eukaryota</taxon>
        <taxon>Metazoa</taxon>
        <taxon>Chordata</taxon>
        <taxon>Craniata</taxon>
        <taxon>Vertebrata</taxon>
        <taxon>Euteleostomi</taxon>
        <taxon>Mammalia</taxon>
        <taxon>Eutheria</taxon>
        <taxon>Euarchontoglires</taxon>
        <taxon>Primates</taxon>
        <taxon>Haplorrhini</taxon>
        <taxon>Catarrhini</taxon>
        <taxon>Hominidae</taxon>
        <taxon>Homo</taxon>
    </lineage>
</organism>
<sequence length="211" mass="24261">MAPSRNGMVLKPHFHKDWQRRVATWFNQPARKIRRRKARQAKARRIAPRPASGPIRPIVRCPTVRYHTKVRAGRGFSLEELRVAGIHKKVARTIGISVDPRRRNKSTESLQANVQRLKEYRSKLILFPRKPSAPKKGDSSAEELKLATQLTGPVMPVRNVYKKEKARVITEEEKNFKAFASLRMARANARLFGIRAKRAKEAAEQDVEKKK</sequence>